<evidence type="ECO:0000250" key="1"/>
<evidence type="ECO:0000256" key="2">
    <source>
        <dbReference type="SAM" id="MobiDB-lite"/>
    </source>
</evidence>
<evidence type="ECO:0000305" key="3"/>
<feature type="chain" id="PRO_0000191486" description="Sperm protamine P1">
    <location>
        <begin position="1"/>
        <end position="62"/>
    </location>
</feature>
<feature type="region of interest" description="Disordered" evidence="2">
    <location>
        <begin position="1"/>
        <end position="62"/>
    </location>
</feature>
<comment type="function">
    <text evidence="1">Protamines substitute for histones in the chromatin of sperm during the haploid phase of spermatogenesis. They compact sperm DNA into a highly condensed, stable and inactive complex (By similarity).</text>
</comment>
<comment type="subcellular location">
    <subcellularLocation>
        <location evidence="1">Nucleus</location>
    </subcellularLocation>
    <subcellularLocation>
        <location evidence="1">Chromosome</location>
    </subcellularLocation>
</comment>
<comment type="tissue specificity">
    <text>Testis.</text>
</comment>
<comment type="similarity">
    <text evidence="3">Belongs to the protamine P1 family.</text>
</comment>
<organism>
    <name type="scientific">Lagostrophus fasciatus</name>
    <name type="common">Banded hare-wallaby</name>
    <dbReference type="NCBI Taxonomy" id="65634"/>
    <lineage>
        <taxon>Eukaryota</taxon>
        <taxon>Metazoa</taxon>
        <taxon>Chordata</taxon>
        <taxon>Craniata</taxon>
        <taxon>Vertebrata</taxon>
        <taxon>Euteleostomi</taxon>
        <taxon>Mammalia</taxon>
        <taxon>Metatheria</taxon>
        <taxon>Diprotodontia</taxon>
        <taxon>Macropodidae</taxon>
        <taxon>Lagostrophus</taxon>
    </lineage>
</organism>
<proteinExistence type="evidence at transcript level"/>
<accession>Q866P6</accession>
<dbReference type="EMBL" id="AY189936">
    <property type="protein sequence ID" value="AAO38998.1"/>
    <property type="molecule type" value="Genomic_DNA"/>
</dbReference>
<dbReference type="GO" id="GO:0000786">
    <property type="term" value="C:nucleosome"/>
    <property type="evidence" value="ECO:0007669"/>
    <property type="project" value="UniProtKB-KW"/>
</dbReference>
<dbReference type="GO" id="GO:0005634">
    <property type="term" value="C:nucleus"/>
    <property type="evidence" value="ECO:0007669"/>
    <property type="project" value="UniProtKB-SubCell"/>
</dbReference>
<dbReference type="GO" id="GO:0003677">
    <property type="term" value="F:DNA binding"/>
    <property type="evidence" value="ECO:0007669"/>
    <property type="project" value="UniProtKB-KW"/>
</dbReference>
<dbReference type="GO" id="GO:0030261">
    <property type="term" value="P:chromosome condensation"/>
    <property type="evidence" value="ECO:0007669"/>
    <property type="project" value="UniProtKB-KW"/>
</dbReference>
<dbReference type="GO" id="GO:0035092">
    <property type="term" value="P:sperm DNA condensation"/>
    <property type="evidence" value="ECO:0007669"/>
    <property type="project" value="InterPro"/>
</dbReference>
<dbReference type="InterPro" id="IPR000221">
    <property type="entry name" value="Protamine_P1"/>
</dbReference>
<dbReference type="PROSITE" id="PS00048">
    <property type="entry name" value="PROTAMINE_P1"/>
    <property type="match status" value="1"/>
</dbReference>
<keyword id="KW-0158">Chromosome</keyword>
<keyword id="KW-0217">Developmental protein</keyword>
<keyword id="KW-0221">Differentiation</keyword>
<keyword id="KW-0226">DNA condensation</keyword>
<keyword id="KW-0238">DNA-binding</keyword>
<keyword id="KW-0544">Nucleosome core</keyword>
<keyword id="KW-0539">Nucleus</keyword>
<keyword id="KW-0744">Spermatogenesis</keyword>
<name>HSP1_LAGFA</name>
<reference key="1">
    <citation type="journal article" date="2002" name="J. Mammal. Evol.">
        <title>Molecular evidence for the last survivor of an ancient kangaroo lineage.</title>
        <authorList>
            <person name="Westerman M."/>
            <person name="Burk A."/>
            <person name="Amrine-Madsen H.M."/>
            <person name="Prideaux G.J."/>
            <person name="Case J.A."/>
            <person name="Springer M.S."/>
        </authorList>
    </citation>
    <scope>NUCLEOTIDE SEQUENCE [GENOMIC DNA]</scope>
</reference>
<gene>
    <name type="primary">PRM1</name>
</gene>
<sequence length="62" mass="8564">MARYRHSRSRSRSRYRRRRRRRSRYRSRRRRYRGSRRSRSRRRGRRRGYSRRRYSRRRRRRY</sequence>
<protein>
    <recommendedName>
        <fullName>Sperm protamine P1</fullName>
    </recommendedName>
</protein>